<evidence type="ECO:0000255" key="1">
    <source>
        <dbReference type="HAMAP-Rule" id="MF_00173"/>
    </source>
</evidence>
<organism>
    <name type="scientific">Staphylococcus aureus (strain MSSA476)</name>
    <dbReference type="NCBI Taxonomy" id="282459"/>
    <lineage>
        <taxon>Bacteria</taxon>
        <taxon>Bacillati</taxon>
        <taxon>Bacillota</taxon>
        <taxon>Bacilli</taxon>
        <taxon>Bacillales</taxon>
        <taxon>Staphylococcaceae</taxon>
        <taxon>Staphylococcus</taxon>
    </lineage>
</organism>
<gene>
    <name evidence="1" type="primary">argR</name>
    <name type="ordered locus">SAS1459</name>
</gene>
<name>ARGR_STAAS</name>
<proteinExistence type="inferred from homology"/>
<sequence>MPKKSVRHIKIREIISNEQIETQDELVKRLNDYDLNVTQATVSRDIKELQLIKVPIPSGQYVYSLPNDRKFHPLEKLGRYLMDSFVNIDGTDNLLVLKTLPGNAQSIGAILDQINWEEVLGTICGDDTCLIICRSKEASDEIKSRIFNLL</sequence>
<reference key="1">
    <citation type="journal article" date="2004" name="Proc. Natl. Acad. Sci. U.S.A.">
        <title>Complete genomes of two clinical Staphylococcus aureus strains: evidence for the rapid evolution of virulence and drug resistance.</title>
        <authorList>
            <person name="Holden M.T.G."/>
            <person name="Feil E.J."/>
            <person name="Lindsay J.A."/>
            <person name="Peacock S.J."/>
            <person name="Day N.P.J."/>
            <person name="Enright M.C."/>
            <person name="Foster T.J."/>
            <person name="Moore C.E."/>
            <person name="Hurst L."/>
            <person name="Atkin R."/>
            <person name="Barron A."/>
            <person name="Bason N."/>
            <person name="Bentley S.D."/>
            <person name="Chillingworth C."/>
            <person name="Chillingworth T."/>
            <person name="Churcher C."/>
            <person name="Clark L."/>
            <person name="Corton C."/>
            <person name="Cronin A."/>
            <person name="Doggett J."/>
            <person name="Dowd L."/>
            <person name="Feltwell T."/>
            <person name="Hance Z."/>
            <person name="Harris B."/>
            <person name="Hauser H."/>
            <person name="Holroyd S."/>
            <person name="Jagels K."/>
            <person name="James K.D."/>
            <person name="Lennard N."/>
            <person name="Line A."/>
            <person name="Mayes R."/>
            <person name="Moule S."/>
            <person name="Mungall K."/>
            <person name="Ormond D."/>
            <person name="Quail M.A."/>
            <person name="Rabbinowitsch E."/>
            <person name="Rutherford K.M."/>
            <person name="Sanders M."/>
            <person name="Sharp S."/>
            <person name="Simmonds M."/>
            <person name="Stevens K."/>
            <person name="Whitehead S."/>
            <person name="Barrell B.G."/>
            <person name="Spratt B.G."/>
            <person name="Parkhill J."/>
        </authorList>
    </citation>
    <scope>NUCLEOTIDE SEQUENCE [LARGE SCALE GENOMIC DNA]</scope>
    <source>
        <strain>MSSA476</strain>
    </source>
</reference>
<feature type="chain" id="PRO_0000205118" description="Arginine repressor">
    <location>
        <begin position="1"/>
        <end position="150"/>
    </location>
</feature>
<keyword id="KW-0028">Amino-acid biosynthesis</keyword>
<keyword id="KW-0055">Arginine biosynthesis</keyword>
<keyword id="KW-0963">Cytoplasm</keyword>
<keyword id="KW-0238">DNA-binding</keyword>
<keyword id="KW-0678">Repressor</keyword>
<keyword id="KW-0804">Transcription</keyword>
<keyword id="KW-0805">Transcription regulation</keyword>
<dbReference type="EMBL" id="BX571857">
    <property type="protein sequence ID" value="CAG43246.1"/>
    <property type="molecule type" value="Genomic_DNA"/>
</dbReference>
<dbReference type="RefSeq" id="WP_001124985.1">
    <property type="nucleotide sequence ID" value="NC_002953.3"/>
</dbReference>
<dbReference type="SMR" id="Q6G945"/>
<dbReference type="GeneID" id="98345891"/>
<dbReference type="KEGG" id="sas:SAS1459"/>
<dbReference type="HOGENOM" id="CLU_097103_3_0_9"/>
<dbReference type="UniPathway" id="UPA00068"/>
<dbReference type="GO" id="GO:0005737">
    <property type="term" value="C:cytoplasm"/>
    <property type="evidence" value="ECO:0007669"/>
    <property type="project" value="UniProtKB-SubCell"/>
</dbReference>
<dbReference type="GO" id="GO:0034618">
    <property type="term" value="F:arginine binding"/>
    <property type="evidence" value="ECO:0007669"/>
    <property type="project" value="InterPro"/>
</dbReference>
<dbReference type="GO" id="GO:0003677">
    <property type="term" value="F:DNA binding"/>
    <property type="evidence" value="ECO:0007669"/>
    <property type="project" value="UniProtKB-KW"/>
</dbReference>
<dbReference type="GO" id="GO:0003700">
    <property type="term" value="F:DNA-binding transcription factor activity"/>
    <property type="evidence" value="ECO:0007669"/>
    <property type="project" value="UniProtKB-UniRule"/>
</dbReference>
<dbReference type="GO" id="GO:0006526">
    <property type="term" value="P:L-arginine biosynthetic process"/>
    <property type="evidence" value="ECO:0007669"/>
    <property type="project" value="UniProtKB-UniPathway"/>
</dbReference>
<dbReference type="GO" id="GO:0051259">
    <property type="term" value="P:protein complex oligomerization"/>
    <property type="evidence" value="ECO:0007669"/>
    <property type="project" value="InterPro"/>
</dbReference>
<dbReference type="GO" id="GO:1900079">
    <property type="term" value="P:regulation of arginine biosynthetic process"/>
    <property type="evidence" value="ECO:0007669"/>
    <property type="project" value="UniProtKB-UniRule"/>
</dbReference>
<dbReference type="Gene3D" id="3.30.1360.40">
    <property type="match status" value="1"/>
</dbReference>
<dbReference type="Gene3D" id="1.10.10.10">
    <property type="entry name" value="Winged helix-like DNA-binding domain superfamily/Winged helix DNA-binding domain"/>
    <property type="match status" value="1"/>
</dbReference>
<dbReference type="HAMAP" id="MF_00173">
    <property type="entry name" value="Arg_repressor"/>
    <property type="match status" value="1"/>
</dbReference>
<dbReference type="InterPro" id="IPR001669">
    <property type="entry name" value="Arg_repress"/>
</dbReference>
<dbReference type="InterPro" id="IPR020899">
    <property type="entry name" value="Arg_repress_C"/>
</dbReference>
<dbReference type="InterPro" id="IPR036251">
    <property type="entry name" value="Arg_repress_C_sf"/>
</dbReference>
<dbReference type="InterPro" id="IPR020900">
    <property type="entry name" value="Arg_repress_DNA-bd"/>
</dbReference>
<dbReference type="InterPro" id="IPR036388">
    <property type="entry name" value="WH-like_DNA-bd_sf"/>
</dbReference>
<dbReference type="InterPro" id="IPR036390">
    <property type="entry name" value="WH_DNA-bd_sf"/>
</dbReference>
<dbReference type="NCBIfam" id="TIGR01529">
    <property type="entry name" value="argR_whole"/>
    <property type="match status" value="1"/>
</dbReference>
<dbReference type="NCBIfam" id="NF003281">
    <property type="entry name" value="PRK04280.1"/>
    <property type="match status" value="1"/>
</dbReference>
<dbReference type="PANTHER" id="PTHR34471">
    <property type="entry name" value="ARGININE REPRESSOR"/>
    <property type="match status" value="1"/>
</dbReference>
<dbReference type="PANTHER" id="PTHR34471:SF1">
    <property type="entry name" value="ARGININE REPRESSOR"/>
    <property type="match status" value="1"/>
</dbReference>
<dbReference type="Pfam" id="PF01316">
    <property type="entry name" value="Arg_repressor"/>
    <property type="match status" value="1"/>
</dbReference>
<dbReference type="Pfam" id="PF02863">
    <property type="entry name" value="Arg_repressor_C"/>
    <property type="match status" value="1"/>
</dbReference>
<dbReference type="PRINTS" id="PR01467">
    <property type="entry name" value="ARGREPRESSOR"/>
</dbReference>
<dbReference type="SUPFAM" id="SSF55252">
    <property type="entry name" value="C-terminal domain of arginine repressor"/>
    <property type="match status" value="1"/>
</dbReference>
<dbReference type="SUPFAM" id="SSF46785">
    <property type="entry name" value="Winged helix' DNA-binding domain"/>
    <property type="match status" value="1"/>
</dbReference>
<comment type="function">
    <text evidence="1">Regulates arginine biosynthesis genes.</text>
</comment>
<comment type="pathway">
    <text>Amino-acid biosynthesis; L-arginine biosynthesis [regulation].</text>
</comment>
<comment type="subcellular location">
    <subcellularLocation>
        <location evidence="1">Cytoplasm</location>
    </subcellularLocation>
</comment>
<comment type="similarity">
    <text evidence="1">Belongs to the ArgR family.</text>
</comment>
<accession>Q6G945</accession>
<protein>
    <recommendedName>
        <fullName evidence="1">Arginine repressor</fullName>
    </recommendedName>
</protein>